<accession>B6ESC4</accession>
<organism>
    <name type="scientific">Aliivibrio salmonicida (strain LFI1238)</name>
    <name type="common">Vibrio salmonicida (strain LFI1238)</name>
    <dbReference type="NCBI Taxonomy" id="316275"/>
    <lineage>
        <taxon>Bacteria</taxon>
        <taxon>Pseudomonadati</taxon>
        <taxon>Pseudomonadota</taxon>
        <taxon>Gammaproteobacteria</taxon>
        <taxon>Vibrionales</taxon>
        <taxon>Vibrionaceae</taxon>
        <taxon>Aliivibrio</taxon>
    </lineage>
</organism>
<gene>
    <name evidence="1" type="primary">bioD</name>
    <name type="ordered locus">VSAL_II0857</name>
</gene>
<proteinExistence type="inferred from homology"/>
<sequence length="227" mass="24387">MIDAFFIAGTDTDVGKTVASKAILDALNMKGLRTAAYKPIAAGSEDKGDGVQNSDAIHLRSVANVELSYDEVNPYALLLPTSPHIAAAAENIVIDYSVLSKGLASLKAKSDIVLVEGAGGWRVPVSKSDCLSTWVQQEKLPVVLVVGIKLGCLSHAMLTEEAIKHDGLDIVGWVANRVNPGTEHYADIIEMLEDKMPAPKLGEIPYMPSIKRKSMGKYINLDSLMEI</sequence>
<dbReference type="EC" id="6.3.3.3" evidence="1"/>
<dbReference type="EMBL" id="FM178380">
    <property type="protein sequence ID" value="CAQ81611.1"/>
    <property type="molecule type" value="Genomic_DNA"/>
</dbReference>
<dbReference type="RefSeq" id="WP_012552131.1">
    <property type="nucleotide sequence ID" value="NC_011313.1"/>
</dbReference>
<dbReference type="SMR" id="B6ESC4"/>
<dbReference type="KEGG" id="vsa:VSAL_II0857"/>
<dbReference type="eggNOG" id="COG0132">
    <property type="taxonomic scope" value="Bacteria"/>
</dbReference>
<dbReference type="HOGENOM" id="CLU_072551_0_0_6"/>
<dbReference type="UniPathway" id="UPA00078">
    <property type="reaction ID" value="UER00161"/>
</dbReference>
<dbReference type="Proteomes" id="UP000001730">
    <property type="component" value="Chromosome 2"/>
</dbReference>
<dbReference type="GO" id="GO:0005829">
    <property type="term" value="C:cytosol"/>
    <property type="evidence" value="ECO:0007669"/>
    <property type="project" value="TreeGrafter"/>
</dbReference>
<dbReference type="GO" id="GO:0005524">
    <property type="term" value="F:ATP binding"/>
    <property type="evidence" value="ECO:0007669"/>
    <property type="project" value="UniProtKB-UniRule"/>
</dbReference>
<dbReference type="GO" id="GO:0004141">
    <property type="term" value="F:dethiobiotin synthase activity"/>
    <property type="evidence" value="ECO:0007669"/>
    <property type="project" value="UniProtKB-UniRule"/>
</dbReference>
<dbReference type="GO" id="GO:0000287">
    <property type="term" value="F:magnesium ion binding"/>
    <property type="evidence" value="ECO:0007669"/>
    <property type="project" value="UniProtKB-UniRule"/>
</dbReference>
<dbReference type="GO" id="GO:0009102">
    <property type="term" value="P:biotin biosynthetic process"/>
    <property type="evidence" value="ECO:0007669"/>
    <property type="project" value="UniProtKB-UniRule"/>
</dbReference>
<dbReference type="CDD" id="cd03109">
    <property type="entry name" value="DTBS"/>
    <property type="match status" value="1"/>
</dbReference>
<dbReference type="FunFam" id="3.40.50.300:FF:000292">
    <property type="entry name" value="ATP-dependent dethiobiotin synthetase BioD"/>
    <property type="match status" value="1"/>
</dbReference>
<dbReference type="Gene3D" id="3.40.50.300">
    <property type="entry name" value="P-loop containing nucleotide triphosphate hydrolases"/>
    <property type="match status" value="1"/>
</dbReference>
<dbReference type="HAMAP" id="MF_00336">
    <property type="entry name" value="BioD"/>
    <property type="match status" value="1"/>
</dbReference>
<dbReference type="InterPro" id="IPR004472">
    <property type="entry name" value="DTB_synth_BioD"/>
</dbReference>
<dbReference type="InterPro" id="IPR027417">
    <property type="entry name" value="P-loop_NTPase"/>
</dbReference>
<dbReference type="NCBIfam" id="TIGR00347">
    <property type="entry name" value="bioD"/>
    <property type="match status" value="1"/>
</dbReference>
<dbReference type="PANTHER" id="PTHR43210">
    <property type="entry name" value="DETHIOBIOTIN SYNTHETASE"/>
    <property type="match status" value="1"/>
</dbReference>
<dbReference type="PANTHER" id="PTHR43210:SF5">
    <property type="entry name" value="DETHIOBIOTIN SYNTHETASE"/>
    <property type="match status" value="1"/>
</dbReference>
<dbReference type="Pfam" id="PF13500">
    <property type="entry name" value="AAA_26"/>
    <property type="match status" value="1"/>
</dbReference>
<dbReference type="PIRSF" id="PIRSF006755">
    <property type="entry name" value="DTB_synth"/>
    <property type="match status" value="1"/>
</dbReference>
<dbReference type="SUPFAM" id="SSF52540">
    <property type="entry name" value="P-loop containing nucleoside triphosphate hydrolases"/>
    <property type="match status" value="1"/>
</dbReference>
<evidence type="ECO:0000255" key="1">
    <source>
        <dbReference type="HAMAP-Rule" id="MF_00336"/>
    </source>
</evidence>
<protein>
    <recommendedName>
        <fullName evidence="1">ATP-dependent dethiobiotin synthetase BioD</fullName>
        <ecNumber evidence="1">6.3.3.3</ecNumber>
    </recommendedName>
    <alternativeName>
        <fullName evidence="1">DTB synthetase</fullName>
        <shortName evidence="1">DTBS</shortName>
    </alternativeName>
    <alternativeName>
        <fullName evidence="1">Dethiobiotin synthase</fullName>
    </alternativeName>
</protein>
<feature type="chain" id="PRO_1000119852" description="ATP-dependent dethiobiotin synthetase BioD">
    <location>
        <begin position="1"/>
        <end position="227"/>
    </location>
</feature>
<feature type="active site" evidence="1">
    <location>
        <position position="38"/>
    </location>
</feature>
<feature type="binding site" evidence="1">
    <location>
        <begin position="13"/>
        <end position="18"/>
    </location>
    <ligand>
        <name>ATP</name>
        <dbReference type="ChEBI" id="CHEBI:30616"/>
    </ligand>
</feature>
<feature type="binding site" evidence="1">
    <location>
        <position position="17"/>
    </location>
    <ligand>
        <name>Mg(2+)</name>
        <dbReference type="ChEBI" id="CHEBI:18420"/>
    </ligand>
</feature>
<feature type="binding site" evidence="1">
    <location>
        <position position="55"/>
    </location>
    <ligand>
        <name>ATP</name>
        <dbReference type="ChEBI" id="CHEBI:30616"/>
    </ligand>
</feature>
<feature type="binding site" evidence="1">
    <location>
        <position position="55"/>
    </location>
    <ligand>
        <name>Mg(2+)</name>
        <dbReference type="ChEBI" id="CHEBI:18420"/>
    </ligand>
</feature>
<feature type="binding site" evidence="1">
    <location>
        <begin position="116"/>
        <end position="119"/>
    </location>
    <ligand>
        <name>ATP</name>
        <dbReference type="ChEBI" id="CHEBI:30616"/>
    </ligand>
</feature>
<feature type="binding site" evidence="1">
    <location>
        <position position="116"/>
    </location>
    <ligand>
        <name>Mg(2+)</name>
        <dbReference type="ChEBI" id="CHEBI:18420"/>
    </ligand>
</feature>
<feature type="binding site" evidence="1">
    <location>
        <begin position="176"/>
        <end position="177"/>
    </location>
    <ligand>
        <name>ATP</name>
        <dbReference type="ChEBI" id="CHEBI:30616"/>
    </ligand>
</feature>
<comment type="function">
    <text evidence="1">Catalyzes a mechanistically unusual reaction, the ATP-dependent insertion of CO2 between the N7 and N8 nitrogen atoms of 7,8-diaminopelargonic acid (DAPA, also called 7,8-diammoniononanoate) to form a ureido ring.</text>
</comment>
<comment type="catalytic activity">
    <reaction evidence="1">
        <text>(7R,8S)-7,8-diammoniononanoate + CO2 + ATP = (4R,5S)-dethiobiotin + ADP + phosphate + 3 H(+)</text>
        <dbReference type="Rhea" id="RHEA:15805"/>
        <dbReference type="ChEBI" id="CHEBI:15378"/>
        <dbReference type="ChEBI" id="CHEBI:16526"/>
        <dbReference type="ChEBI" id="CHEBI:30616"/>
        <dbReference type="ChEBI" id="CHEBI:43474"/>
        <dbReference type="ChEBI" id="CHEBI:149469"/>
        <dbReference type="ChEBI" id="CHEBI:149473"/>
        <dbReference type="ChEBI" id="CHEBI:456216"/>
        <dbReference type="EC" id="6.3.3.3"/>
    </reaction>
</comment>
<comment type="cofactor">
    <cofactor evidence="1">
        <name>Mg(2+)</name>
        <dbReference type="ChEBI" id="CHEBI:18420"/>
    </cofactor>
</comment>
<comment type="pathway">
    <text evidence="1">Cofactor biosynthesis; biotin biosynthesis; biotin from 7,8-diaminononanoate: step 1/2.</text>
</comment>
<comment type="subunit">
    <text evidence="1">Homodimer.</text>
</comment>
<comment type="subcellular location">
    <subcellularLocation>
        <location evidence="1">Cytoplasm</location>
    </subcellularLocation>
</comment>
<comment type="similarity">
    <text evidence="1">Belongs to the dethiobiotin synthetase family.</text>
</comment>
<keyword id="KW-0067">ATP-binding</keyword>
<keyword id="KW-0093">Biotin biosynthesis</keyword>
<keyword id="KW-0963">Cytoplasm</keyword>
<keyword id="KW-0436">Ligase</keyword>
<keyword id="KW-0460">Magnesium</keyword>
<keyword id="KW-0479">Metal-binding</keyword>
<keyword id="KW-0547">Nucleotide-binding</keyword>
<name>BIOD_ALISL</name>
<reference key="1">
    <citation type="journal article" date="2008" name="BMC Genomics">
        <title>The genome sequence of the fish pathogen Aliivibrio salmonicida strain LFI1238 shows extensive evidence of gene decay.</title>
        <authorList>
            <person name="Hjerde E."/>
            <person name="Lorentzen M.S."/>
            <person name="Holden M.T."/>
            <person name="Seeger K."/>
            <person name="Paulsen S."/>
            <person name="Bason N."/>
            <person name="Churcher C."/>
            <person name="Harris D."/>
            <person name="Norbertczak H."/>
            <person name="Quail M.A."/>
            <person name="Sanders S."/>
            <person name="Thurston S."/>
            <person name="Parkhill J."/>
            <person name="Willassen N.P."/>
            <person name="Thomson N.R."/>
        </authorList>
    </citation>
    <scope>NUCLEOTIDE SEQUENCE [LARGE SCALE GENOMIC DNA]</scope>
    <source>
        <strain>LFI1238</strain>
    </source>
</reference>